<feature type="chain" id="PRO_1000145257" description="ATP synthase subunit a">
    <location>
        <begin position="1"/>
        <end position="282"/>
    </location>
</feature>
<feature type="transmembrane region" description="Helical" evidence="1">
    <location>
        <begin position="38"/>
        <end position="58"/>
    </location>
</feature>
<feature type="transmembrane region" description="Helical" evidence="1">
    <location>
        <begin position="97"/>
        <end position="117"/>
    </location>
</feature>
<feature type="transmembrane region" description="Helical" evidence="1">
    <location>
        <begin position="145"/>
        <end position="165"/>
    </location>
</feature>
<feature type="transmembrane region" description="Helical" evidence="1">
    <location>
        <begin position="187"/>
        <end position="207"/>
    </location>
</feature>
<feature type="transmembrane region" description="Helical" evidence="1">
    <location>
        <begin position="225"/>
        <end position="247"/>
    </location>
</feature>
<feature type="transmembrane region" description="Helical" evidence="1">
    <location>
        <begin position="261"/>
        <end position="281"/>
    </location>
</feature>
<dbReference type="EMBL" id="AM406670">
    <property type="protein sequence ID" value="CAL92771.1"/>
    <property type="molecule type" value="Genomic_DNA"/>
</dbReference>
<dbReference type="RefSeq" id="WP_011763890.1">
    <property type="nucleotide sequence ID" value="NC_008702.1"/>
</dbReference>
<dbReference type="SMR" id="A1K1R6"/>
<dbReference type="STRING" id="62928.azo0153"/>
<dbReference type="KEGG" id="aoa:dqs_0162"/>
<dbReference type="KEGG" id="azo:azo0153"/>
<dbReference type="eggNOG" id="COG0356">
    <property type="taxonomic scope" value="Bacteria"/>
</dbReference>
<dbReference type="HOGENOM" id="CLU_041018_1_0_4"/>
<dbReference type="OrthoDB" id="9789241at2"/>
<dbReference type="Proteomes" id="UP000002588">
    <property type="component" value="Chromosome"/>
</dbReference>
<dbReference type="GO" id="GO:0005886">
    <property type="term" value="C:plasma membrane"/>
    <property type="evidence" value="ECO:0007669"/>
    <property type="project" value="UniProtKB-SubCell"/>
</dbReference>
<dbReference type="GO" id="GO:0045259">
    <property type="term" value="C:proton-transporting ATP synthase complex"/>
    <property type="evidence" value="ECO:0007669"/>
    <property type="project" value="UniProtKB-KW"/>
</dbReference>
<dbReference type="GO" id="GO:0046933">
    <property type="term" value="F:proton-transporting ATP synthase activity, rotational mechanism"/>
    <property type="evidence" value="ECO:0007669"/>
    <property type="project" value="UniProtKB-UniRule"/>
</dbReference>
<dbReference type="GO" id="GO:0042777">
    <property type="term" value="P:proton motive force-driven plasma membrane ATP synthesis"/>
    <property type="evidence" value="ECO:0007669"/>
    <property type="project" value="TreeGrafter"/>
</dbReference>
<dbReference type="CDD" id="cd00310">
    <property type="entry name" value="ATP-synt_Fo_a_6"/>
    <property type="match status" value="1"/>
</dbReference>
<dbReference type="FunFam" id="1.20.120.220:FF:000002">
    <property type="entry name" value="ATP synthase subunit a"/>
    <property type="match status" value="1"/>
</dbReference>
<dbReference type="Gene3D" id="1.20.120.220">
    <property type="entry name" value="ATP synthase, F0 complex, subunit A"/>
    <property type="match status" value="1"/>
</dbReference>
<dbReference type="HAMAP" id="MF_01393">
    <property type="entry name" value="ATP_synth_a_bact"/>
    <property type="match status" value="1"/>
</dbReference>
<dbReference type="InterPro" id="IPR045082">
    <property type="entry name" value="ATP_syn_F0_a_bact/chloroplast"/>
</dbReference>
<dbReference type="InterPro" id="IPR000568">
    <property type="entry name" value="ATP_synth_F0_asu"/>
</dbReference>
<dbReference type="InterPro" id="IPR023011">
    <property type="entry name" value="ATP_synth_F0_asu_AS"/>
</dbReference>
<dbReference type="InterPro" id="IPR035908">
    <property type="entry name" value="F0_ATP_A_sf"/>
</dbReference>
<dbReference type="NCBIfam" id="TIGR01131">
    <property type="entry name" value="ATP_synt_6_or_A"/>
    <property type="match status" value="1"/>
</dbReference>
<dbReference type="NCBIfam" id="NF004477">
    <property type="entry name" value="PRK05815.1-1"/>
    <property type="match status" value="1"/>
</dbReference>
<dbReference type="PANTHER" id="PTHR42823">
    <property type="entry name" value="ATP SYNTHASE SUBUNIT A, CHLOROPLASTIC"/>
    <property type="match status" value="1"/>
</dbReference>
<dbReference type="PANTHER" id="PTHR42823:SF3">
    <property type="entry name" value="ATP SYNTHASE SUBUNIT A, CHLOROPLASTIC"/>
    <property type="match status" value="1"/>
</dbReference>
<dbReference type="Pfam" id="PF00119">
    <property type="entry name" value="ATP-synt_A"/>
    <property type="match status" value="1"/>
</dbReference>
<dbReference type="SUPFAM" id="SSF81336">
    <property type="entry name" value="F1F0 ATP synthase subunit A"/>
    <property type="match status" value="1"/>
</dbReference>
<dbReference type="PROSITE" id="PS00449">
    <property type="entry name" value="ATPASE_A"/>
    <property type="match status" value="1"/>
</dbReference>
<protein>
    <recommendedName>
        <fullName evidence="1">ATP synthase subunit a</fullName>
    </recommendedName>
    <alternativeName>
        <fullName evidence="1">ATP synthase F0 sector subunit a</fullName>
    </alternativeName>
    <alternativeName>
        <fullName evidence="1">F-ATPase subunit 6</fullName>
    </alternativeName>
</protein>
<accession>A1K1R6</accession>
<comment type="function">
    <text evidence="1">Key component of the proton channel; it plays a direct role in the translocation of protons across the membrane.</text>
</comment>
<comment type="subunit">
    <text evidence="1">F-type ATPases have 2 components, CF(1) - the catalytic core - and CF(0) - the membrane proton channel. CF(1) has five subunits: alpha(3), beta(3), gamma(1), delta(1), epsilon(1). CF(0) has three main subunits: a(1), b(2) and c(9-12). The alpha and beta chains form an alternating ring which encloses part of the gamma chain. CF(1) is attached to CF(0) by a central stalk formed by the gamma and epsilon chains, while a peripheral stalk is formed by the delta and b chains.</text>
</comment>
<comment type="subcellular location">
    <subcellularLocation>
        <location evidence="1">Cell inner membrane</location>
        <topology evidence="1">Multi-pass membrane protein</topology>
    </subcellularLocation>
</comment>
<comment type="similarity">
    <text evidence="1">Belongs to the ATPase A chain family.</text>
</comment>
<evidence type="ECO:0000255" key="1">
    <source>
        <dbReference type="HAMAP-Rule" id="MF_01393"/>
    </source>
</evidence>
<name>ATP6_AZOSB</name>
<proteinExistence type="inferred from homology"/>
<reference key="1">
    <citation type="journal article" date="2006" name="Nat. Biotechnol.">
        <title>Complete genome of the mutualistic, N2-fixing grass endophyte Azoarcus sp. strain BH72.</title>
        <authorList>
            <person name="Krause A."/>
            <person name="Ramakumar A."/>
            <person name="Bartels D."/>
            <person name="Battistoni F."/>
            <person name="Bekel T."/>
            <person name="Boch J."/>
            <person name="Boehm M."/>
            <person name="Friedrich F."/>
            <person name="Hurek T."/>
            <person name="Krause L."/>
            <person name="Linke B."/>
            <person name="McHardy A.C."/>
            <person name="Sarkar A."/>
            <person name="Schneiker S."/>
            <person name="Syed A.A."/>
            <person name="Thauer R."/>
            <person name="Vorhoelter F.-J."/>
            <person name="Weidner S."/>
            <person name="Puehler A."/>
            <person name="Reinhold-Hurek B."/>
            <person name="Kaiser O."/>
            <person name="Goesmann A."/>
        </authorList>
    </citation>
    <scope>NUCLEOTIDE SEQUENCE [LARGE SCALE GENOMIC DNA]</scope>
    <source>
        <strain>BH72</strain>
    </source>
</reference>
<organism>
    <name type="scientific">Azoarcus sp. (strain BH72)</name>
    <dbReference type="NCBI Taxonomy" id="418699"/>
    <lineage>
        <taxon>Bacteria</taxon>
        <taxon>Pseudomonadati</taxon>
        <taxon>Pseudomonadota</taxon>
        <taxon>Betaproteobacteria</taxon>
        <taxon>Rhodocyclales</taxon>
        <taxon>Zoogloeaceae</taxon>
        <taxon>Azoarcus</taxon>
    </lineage>
</organism>
<sequence length="282" mass="30907">MATEHAPTASEYVVHHLTHLNSTGHAQTSIVDFSVINVDSMFYSVLLGLLTVFLLWLAARKATAGVPGRFQGFVELLVEMVADQAKGIIHSAESRKFVAPLALTVFVWIFLMNAMDMLPVDLLPRIWEGVYASAGGDPHHAYMRVVPTADLSATLGMSCGVLLLCLYYNVKIKGVSGWVHELFTAPFGSHPLLYPINFAMQIIEFVAKTVSHGMRLFGNMYAGELIFILIALLGSTATVFGFVGHIVAGSIWAIFHILIITLQAFIFMMLTLVYIGQAHEGH</sequence>
<keyword id="KW-0066">ATP synthesis</keyword>
<keyword id="KW-0997">Cell inner membrane</keyword>
<keyword id="KW-1003">Cell membrane</keyword>
<keyword id="KW-0138">CF(0)</keyword>
<keyword id="KW-0375">Hydrogen ion transport</keyword>
<keyword id="KW-0406">Ion transport</keyword>
<keyword id="KW-0472">Membrane</keyword>
<keyword id="KW-1185">Reference proteome</keyword>
<keyword id="KW-0812">Transmembrane</keyword>
<keyword id="KW-1133">Transmembrane helix</keyword>
<keyword id="KW-0813">Transport</keyword>
<gene>
    <name evidence="1" type="primary">atpB</name>
    <name type="ordered locus">azo0153</name>
</gene>